<name>CORA_SALTY</name>
<gene>
    <name type="primary">corA</name>
    <name type="ordered locus">STM3952</name>
    <name type="ORF">STMD1.38</name>
</gene>
<organism>
    <name type="scientific">Salmonella typhimurium (strain LT2 / SGSC1412 / ATCC 700720)</name>
    <dbReference type="NCBI Taxonomy" id="99287"/>
    <lineage>
        <taxon>Bacteria</taxon>
        <taxon>Pseudomonadati</taxon>
        <taxon>Pseudomonadota</taxon>
        <taxon>Gammaproteobacteria</taxon>
        <taxon>Enterobacterales</taxon>
        <taxon>Enterobacteriaceae</taxon>
        <taxon>Salmonella</taxon>
    </lineage>
</organism>
<evidence type="ECO:0000250" key="1">
    <source>
        <dbReference type="UniProtKB" id="Q9WZ31"/>
    </source>
</evidence>
<evidence type="ECO:0000255" key="2"/>
<evidence type="ECO:0000269" key="3">
    <source>
    </source>
</evidence>
<evidence type="ECO:0000269" key="4">
    <source>
    </source>
</evidence>
<evidence type="ECO:0000269" key="5">
    <source>
    </source>
</evidence>
<evidence type="ECO:0000269" key="6">
    <source>
    </source>
</evidence>
<evidence type="ECO:0000269" key="7">
    <source>
    </source>
</evidence>
<evidence type="ECO:0000269" key="8">
    <source>
    </source>
</evidence>
<evidence type="ECO:0000269" key="9">
    <source>
    </source>
</evidence>
<evidence type="ECO:0000269" key="10">
    <source>
    </source>
</evidence>
<evidence type="ECO:0000269" key="11">
    <source>
    </source>
</evidence>
<evidence type="ECO:0000269" key="12">
    <source>
    </source>
</evidence>
<evidence type="ECO:0000305" key="13"/>
<evidence type="ECO:0000305" key="14">
    <source>
    </source>
</evidence>
<sequence>MLSAFQLEKNRLTRLEVEESQSLIDAVWVDLVEPDDDERLRVQSELGQSLATRPELEDIEASARFFEDEDGLHIHSFFFFEDAEDHAGNSTVAFTIRDGRLFTLRERELPAFRLYRMRARSQAMVDGNAYELLLDLFETKIEQLADEIENIYSDLEKLSRVIMEGHQGDEYDEALSTLAELEDIGWKVRLCLMDTQRALNFLVRKARLPGGQLEQAREILRDIESLLPHNESLFQKVNFLMQAAMGFINIEQNRIIKIFSVVSVVFLPPTLVASSYGMNFEFMPELKWSFGYPGAIIFMILAGLAPYLYFKRKNWL</sequence>
<reference key="1">
    <citation type="journal article" date="1993" name="J. Biol. Chem.">
        <title>Sequence and topology of the CorA magnesium transport systems of Salmonella typhimurium and Escherichia coli. Identification of a new class of transport protein.</title>
        <authorList>
            <person name="Smith R.L."/>
            <person name="Banks J.L."/>
            <person name="Snavely M.D."/>
            <person name="Maguire M.E."/>
        </authorList>
    </citation>
    <scope>NUCLEOTIDE SEQUENCE [GENOMIC DNA]</scope>
    <scope>SUBCELLULAR LOCATION</scope>
    <scope>TOPOLOGY</scope>
</reference>
<reference key="2">
    <citation type="journal article" date="2001" name="Nature">
        <title>Complete genome sequence of Salmonella enterica serovar Typhimurium LT2.</title>
        <authorList>
            <person name="McClelland M."/>
            <person name="Sanderson K.E."/>
            <person name="Spieth J."/>
            <person name="Clifton S.W."/>
            <person name="Latreille P."/>
            <person name="Courtney L."/>
            <person name="Porwollik S."/>
            <person name="Ali J."/>
            <person name="Dante M."/>
            <person name="Du F."/>
            <person name="Hou S."/>
            <person name="Layman D."/>
            <person name="Leonard S."/>
            <person name="Nguyen C."/>
            <person name="Scott K."/>
            <person name="Holmes A."/>
            <person name="Grewal N."/>
            <person name="Mulvaney E."/>
            <person name="Ryan E."/>
            <person name="Sun H."/>
            <person name="Florea L."/>
            <person name="Miller W."/>
            <person name="Stoneking T."/>
            <person name="Nhan M."/>
            <person name="Waterston R."/>
            <person name="Wilson R.K."/>
        </authorList>
    </citation>
    <scope>NUCLEOTIDE SEQUENCE [LARGE SCALE GENOMIC DNA]</scope>
    <source>
        <strain>LT2 / SGSC1412 / ATCC 700720</strain>
    </source>
</reference>
<reference key="3">
    <citation type="journal article" date="1986" name="J. Bacteriol.">
        <title>Magnesium transport in Salmonella typhimurium: characterization of magnesium influx and cloning of a transport gene.</title>
        <authorList>
            <person name="Hmiel S.P."/>
            <person name="Snavely M.D."/>
            <person name="Miller C.G."/>
            <person name="Maguire M.E."/>
        </authorList>
    </citation>
    <scope>FUNCTION</scope>
    <scope>CATALYTIC ACTIVITY</scope>
    <scope>INDUCTION</scope>
    <scope>BIOPHYSICOCHEMICAL PROPERTIES</scope>
    <source>
        <strain>LT2</strain>
    </source>
</reference>
<reference key="4">
    <citation type="journal article" date="1989" name="J. Bacteriol.">
        <title>Magnesium transport in Salmonella typhimurium: genetic characterization and cloning of three magnesium transport loci.</title>
        <authorList>
            <person name="Hmiel S.P."/>
            <person name="Snavely M.D."/>
            <person name="Florer J.B."/>
            <person name="Maguire M.E."/>
            <person name="Miller C.G."/>
        </authorList>
    </citation>
    <scope>FUNCTION</scope>
</reference>
<reference key="5">
    <citation type="journal article" date="1989" name="J. Bacteriol.">
        <title>Magnesium transport in Salmonella typhimurium: expression of cloned genes for three distinct Mg2+ transport systems.</title>
        <authorList>
            <person name="Snavely M.D."/>
            <person name="Florer J.B."/>
            <person name="Miller C.G."/>
            <person name="Maguire M.E."/>
        </authorList>
    </citation>
    <scope>SUBCELLULAR LOCATION</scope>
</reference>
<reference key="6">
    <citation type="journal article" date="1989" name="J. Bacteriol.">
        <title>Magnesium transport in Salmonella typhimurium: (28)Mg2+ transport by the CorA, MgtA, and MgtB systems.</title>
        <authorList>
            <person name="Snavely M.D."/>
            <person name="Florer J.B."/>
            <person name="Miller C.G."/>
            <person name="Maguire M.E."/>
        </authorList>
    </citation>
    <scope>FUNCTION</scope>
    <scope>CATALYTIC ACTIVITY</scope>
    <scope>BIOPHYSICOCHEMICAL PROPERTIES</scope>
</reference>
<reference key="7">
    <citation type="journal article" date="1998" name="J. Biol. Chem.">
        <title>The CorA Mg2+ transport protein of Salmonella typhimurium. Mutagenesis of conserved residues in the third membrane domain identifies a Mg2+ pore.</title>
        <authorList>
            <person name="Smith R.L."/>
            <person name="Szegedy M.A."/>
            <person name="Kucharski L.M."/>
            <person name="Walker C."/>
            <person name="Wiet R.M."/>
            <person name="Redpath A."/>
            <person name="Kaczmarek M.T."/>
            <person name="Maguire M.E."/>
        </authorList>
    </citation>
    <scope>FUNCTION</scope>
    <scope>MUTAGENESIS OF TYR-292 AND MET-299</scope>
</reference>
<reference key="8">
    <citation type="journal article" date="1999" name="J. Biol. Chem.">
        <title>The CorA Mg(2+) transport protein of Salmonella typhimurium. Mutagenesis of conserved residues in the second membrane domain.</title>
        <authorList>
            <person name="Szegedy M.A."/>
            <person name="Maguire M.E."/>
        </authorList>
    </citation>
    <scope>FUNCTION</scope>
    <scope>MUTAGENESIS OF SER-260; THR-270; SER-274; TYR-276; GLY-277; MET-278; ASN-279 AND PHE-280</scope>
</reference>
<reference key="9">
    <citation type="journal article" date="2000" name="J. Biol. Chem.">
        <title>Cation hexaammines are selective and potent inhibitors of the CorA magnesium transport system.</title>
        <authorList>
            <person name="Kucharski L.M."/>
            <person name="Lubbe W.J."/>
            <person name="Maguire M.E."/>
        </authorList>
    </citation>
    <scope>FUNCTION</scope>
    <scope>INHIBITION BY CATION HEXAAMMINES</scope>
    <scope>ACTIVITY REGULATION</scope>
</reference>
<reference key="10">
    <citation type="journal article" date="2004" name="J. Bacteriol.">
        <title>The CorA Mg2+ transporter is a homotetramer.</title>
        <authorList>
            <person name="Warren M.A."/>
            <person name="Kucharski L.M."/>
            <person name="Veenstra A."/>
            <person name="Shi L."/>
            <person name="Grulich P.F."/>
            <person name="Maguire M.E."/>
        </authorList>
    </citation>
    <scope>SUBUNIT</scope>
</reference>
<reference key="11">
    <citation type="journal article" date="2004" name="J. Bacteriol.">
        <title>The CorA Mg2+ transporter does not transport Fe2+.</title>
        <authorList>
            <person name="Papp K.M."/>
            <person name="Maguire M.E."/>
        </authorList>
    </citation>
    <scope>FUNCTION</scope>
</reference>
<accession>P0A2R8</accession>
<accession>P31138</accession>
<protein>
    <recommendedName>
        <fullName>Magnesium transport protein CorA</fullName>
    </recommendedName>
</protein>
<proteinExistence type="evidence at protein level"/>
<comment type="function">
    <text evidence="1 3 4 6 7 9 10">Mediates both influx and efflux of magnesium ions (PubMed:10601252, PubMed:10748031, PubMed:2548998, PubMed:2670893, PubMed:3536881, PubMed:9786860). Can also mediate cobalt and nickel uptake, albeit only at extracellular concentrations that are toxic to the cell (PubMed:2670893, PubMed:3536881). Does not transport iron (PubMed:15516579). Alternates between open and closed states. Activated by low cytoplasmic Mg(2+) levels. Inactive when cytoplasmic Mg(2+) levels are high (By similarity).</text>
</comment>
<comment type="catalytic activity">
    <reaction evidence="9 10">
        <text>Mg(2+)(in) = Mg(2+)(out)</text>
        <dbReference type="Rhea" id="RHEA:29827"/>
        <dbReference type="ChEBI" id="CHEBI:18420"/>
    </reaction>
</comment>
<comment type="catalytic activity">
    <reaction evidence="9 10">
        <text>Co(2+)(in) = Co(2+)(out)</text>
        <dbReference type="Rhea" id="RHEA:28578"/>
        <dbReference type="ChEBI" id="CHEBI:48828"/>
    </reaction>
</comment>
<comment type="catalytic activity">
    <reaction evidence="9">
        <text>Ni(2+)(in) = Ni(2+)(out)</text>
        <dbReference type="Rhea" id="RHEA:29831"/>
        <dbReference type="ChEBI" id="CHEBI:49786"/>
    </reaction>
</comment>
<comment type="activity regulation">
    <text evidence="4">Inhibited by cation hexaammines.</text>
</comment>
<comment type="biophysicochemical properties">
    <kinetics>
        <KM evidence="9 10">15 uM for magnesium ions</KM>
        <KM evidence="10">30 uM for cobalt ions</KM>
        <KM evidence="10">300 uM for nickel ions</KM>
    </kinetics>
</comment>
<comment type="subunit">
    <text evidence="1 5">Homopentamer. In the absence of Mg(2+), interactions between subunits are weakened, and dimers, trimers and tetramers can be observed in vitro (By similarity). Homotetramer (PubMed:15231793).</text>
</comment>
<comment type="subcellular location">
    <subcellularLocation>
        <location evidence="8 11 14">Cell inner membrane</location>
        <topology evidence="11">Multi-pass membrane protein</topology>
    </subcellularLocation>
</comment>
<comment type="induction">
    <text evidence="10">Constitutively expressed.</text>
</comment>
<comment type="domain">
    <text evidence="1">The central ion permeation pathway is formed by the first transmembrane domain from each of the five subunits. Mg(2+) binding strengthens interactions between subunits and leads to the formation of a symmetrical homopentamer surrounding a closed ion permeation pathway. Co(2+) binding also induces a conformation change. Low Mg(2+) concentrations trigger both a conformation change within each subunit and a loosening of the interactions between subunits. This results in an open ion conduction pathway. In addition, this results in a less symmetrical shape of the whole complex.</text>
</comment>
<comment type="miscellaneous">
    <text>Is the dominant magnesium transport system under laboratory growth conditions.</text>
</comment>
<comment type="similarity">
    <text evidence="13">Belongs to the CorA metal ion transporter (MIT) (TC 1.A.35) family.</text>
</comment>
<feature type="chain" id="PRO_0000201532" description="Magnesium transport protein CorA">
    <location>
        <begin position="1"/>
        <end position="316"/>
    </location>
</feature>
<feature type="topological domain" description="Cytoplasmic" evidence="13">
    <location>
        <begin position="1"/>
        <end position="254"/>
    </location>
</feature>
<feature type="transmembrane region" description="Helical" evidence="2">
    <location>
        <begin position="255"/>
        <end position="273"/>
    </location>
</feature>
<feature type="topological domain" description="Periplasmic" evidence="13">
    <location>
        <begin position="274"/>
        <end position="287"/>
    </location>
</feature>
<feature type="transmembrane region" description="Helical" evidence="2">
    <location>
        <begin position="288"/>
        <end position="310"/>
    </location>
</feature>
<feature type="topological domain" description="Cytoplasmic" evidence="11">
    <location>
        <begin position="311"/>
        <end position="316"/>
    </location>
</feature>
<feature type="short sequence motif" description="Probable selectivity filter" evidence="1">
    <location>
        <begin position="277"/>
        <end position="279"/>
    </location>
</feature>
<feature type="site" description="Essential for ion permeation" evidence="1">
    <location>
        <position position="253"/>
    </location>
</feature>
<feature type="mutagenesis site" description="Reduces magnesium transport by about 99%." evidence="3">
    <original>S</original>
    <variation>V</variation>
    <location>
        <position position="260"/>
    </location>
</feature>
<feature type="mutagenesis site" description="Reduces magnesium transport by about 95%." evidence="3">
    <original>T</original>
    <variation>A</variation>
    <variation>C</variation>
    <location>
        <position position="270"/>
    </location>
</feature>
<feature type="mutagenesis site" description="Reduces magnesium transport by about 95%." evidence="3">
    <original>S</original>
    <variation>A</variation>
    <variation>C</variation>
    <location>
        <position position="274"/>
    </location>
</feature>
<feature type="mutagenesis site" description="Reduces magnesium transport by about 99%." evidence="3">
    <original>Y</original>
    <variation>A</variation>
    <variation>F</variation>
    <location>
        <position position="276"/>
    </location>
</feature>
<feature type="mutagenesis site" description="Reduces magnesium transport by about 99%." evidence="3">
    <original>G</original>
    <variation>A</variation>
    <location>
        <position position="277"/>
    </location>
</feature>
<feature type="mutagenesis site" description="Reduces magnesium transport by about 99%." evidence="3">
    <original>M</original>
    <variation>A</variation>
    <variation>C</variation>
    <variation>I</variation>
    <location>
        <position position="278"/>
    </location>
</feature>
<feature type="mutagenesis site" description="Reduces magnesium transport by about 99%." evidence="3">
    <original>N</original>
    <variation>A</variation>
    <variation>L</variation>
    <variation>Q</variation>
    <location>
        <position position="279"/>
    </location>
</feature>
<feature type="mutagenesis site" description="Reduces magnesium transport by about 99%." evidence="3">
    <original>F</original>
    <variation>A</variation>
    <variation>R</variation>
    <variation>W</variation>
    <variation>Y</variation>
    <location>
        <position position="280"/>
    </location>
</feature>
<feature type="mutagenesis site" description="Reduces affinity for magnesium about 10-fold. Reduces magnesium transport by about 98%." evidence="12">
    <original>Y</original>
    <variation>C</variation>
    <variation>F</variation>
    <variation>I</variation>
    <variation>S</variation>
    <location>
        <position position="292"/>
    </location>
</feature>
<feature type="mutagenesis site" description="Reduces affinity for magnesium 50-fold." evidence="12">
    <original>M</original>
    <variation>A</variation>
    <variation>C</variation>
    <location>
        <position position="299"/>
    </location>
</feature>
<dbReference type="EMBL" id="L11043">
    <property type="protein sequence ID" value="AAA02966.1"/>
    <property type="molecule type" value="Unassigned_DNA"/>
</dbReference>
<dbReference type="EMBL" id="AF233324">
    <property type="protein sequence ID" value="AAF33440.1"/>
    <property type="molecule type" value="Genomic_DNA"/>
</dbReference>
<dbReference type="EMBL" id="AE006468">
    <property type="protein sequence ID" value="AAL22796.1"/>
    <property type="molecule type" value="Genomic_DNA"/>
</dbReference>
<dbReference type="PIR" id="A47157">
    <property type="entry name" value="A47157"/>
</dbReference>
<dbReference type="RefSeq" id="NP_462837.1">
    <property type="nucleotide sequence ID" value="NC_003197.2"/>
</dbReference>
<dbReference type="RefSeq" id="WP_000947139.1">
    <property type="nucleotide sequence ID" value="NC_003197.2"/>
</dbReference>
<dbReference type="SMR" id="P0A2R8"/>
<dbReference type="STRING" id="99287.STM3952"/>
<dbReference type="TCDB" id="1.A.35.1.2">
    <property type="family name" value="the cora metal ion transporter (mit) family"/>
</dbReference>
<dbReference type="PaxDb" id="99287-STM3952"/>
<dbReference type="GeneID" id="1255478"/>
<dbReference type="KEGG" id="stm:STM3952"/>
<dbReference type="PATRIC" id="fig|99287.12.peg.4170"/>
<dbReference type="HOGENOM" id="CLU_007127_5_0_6"/>
<dbReference type="OMA" id="CMITIHP"/>
<dbReference type="PhylomeDB" id="P0A2R8"/>
<dbReference type="BioCyc" id="SENT99287:STM3952-MONOMER"/>
<dbReference type="BRENDA" id="7.2.2.14">
    <property type="organism ID" value="2169"/>
</dbReference>
<dbReference type="SABIO-RK" id="P0A2R8"/>
<dbReference type="Proteomes" id="UP000001014">
    <property type="component" value="Chromosome"/>
</dbReference>
<dbReference type="GO" id="GO:0005886">
    <property type="term" value="C:plasma membrane"/>
    <property type="evidence" value="ECO:0007669"/>
    <property type="project" value="UniProtKB-SubCell"/>
</dbReference>
<dbReference type="GO" id="GO:0015087">
    <property type="term" value="F:cobalt ion transmembrane transporter activity"/>
    <property type="evidence" value="ECO:0000318"/>
    <property type="project" value="GO_Central"/>
</dbReference>
<dbReference type="GO" id="GO:0015095">
    <property type="term" value="F:magnesium ion transmembrane transporter activity"/>
    <property type="evidence" value="ECO:0000318"/>
    <property type="project" value="GO_Central"/>
</dbReference>
<dbReference type="GO" id="GO:0015099">
    <property type="term" value="F:nickel cation transmembrane transporter activity"/>
    <property type="evidence" value="ECO:0000318"/>
    <property type="project" value="GO_Central"/>
</dbReference>
<dbReference type="CDD" id="cd12835">
    <property type="entry name" value="EcCorA-like_1"/>
    <property type="match status" value="1"/>
</dbReference>
<dbReference type="FunFam" id="1.20.58.340:FF:000001">
    <property type="entry name" value="Magnesium transport protein CorA"/>
    <property type="match status" value="1"/>
</dbReference>
<dbReference type="Gene3D" id="1.20.58.340">
    <property type="entry name" value="Magnesium transport protein CorA, transmembrane region"/>
    <property type="match status" value="1"/>
</dbReference>
<dbReference type="InterPro" id="IPR045861">
    <property type="entry name" value="CorA_cytoplasmic_dom"/>
</dbReference>
<dbReference type="InterPro" id="IPR050829">
    <property type="entry name" value="CorA_MIT"/>
</dbReference>
<dbReference type="InterPro" id="IPR045863">
    <property type="entry name" value="CorA_TM1_TM2"/>
</dbReference>
<dbReference type="InterPro" id="IPR004488">
    <property type="entry name" value="Mg/Co-transport_prot_CorA"/>
</dbReference>
<dbReference type="InterPro" id="IPR002523">
    <property type="entry name" value="MgTranspt_CorA/ZnTranspt_ZntB"/>
</dbReference>
<dbReference type="NCBIfam" id="TIGR00383">
    <property type="entry name" value="corA"/>
    <property type="match status" value="1"/>
</dbReference>
<dbReference type="PANTHER" id="PTHR47685">
    <property type="entry name" value="MAGNESIUM TRANSPORT PROTEIN CORA"/>
    <property type="match status" value="1"/>
</dbReference>
<dbReference type="PANTHER" id="PTHR47685:SF1">
    <property type="entry name" value="MAGNESIUM TRANSPORT PROTEIN CORA"/>
    <property type="match status" value="1"/>
</dbReference>
<dbReference type="Pfam" id="PF01544">
    <property type="entry name" value="CorA"/>
    <property type="match status" value="1"/>
</dbReference>
<dbReference type="SUPFAM" id="SSF143865">
    <property type="entry name" value="CorA soluble domain-like"/>
    <property type="match status" value="1"/>
</dbReference>
<dbReference type="SUPFAM" id="SSF144083">
    <property type="entry name" value="Magnesium transport protein CorA, transmembrane region"/>
    <property type="match status" value="1"/>
</dbReference>
<keyword id="KW-0997">Cell inner membrane</keyword>
<keyword id="KW-1003">Cell membrane</keyword>
<keyword id="KW-0170">Cobalt</keyword>
<keyword id="KW-0406">Ion transport</keyword>
<keyword id="KW-0460">Magnesium</keyword>
<keyword id="KW-0472">Membrane</keyword>
<keyword id="KW-0533">Nickel</keyword>
<keyword id="KW-1185">Reference proteome</keyword>
<keyword id="KW-0812">Transmembrane</keyword>
<keyword id="KW-1133">Transmembrane helix</keyword>
<keyword id="KW-0813">Transport</keyword>